<organism>
    <name type="scientific">Oncorhynchus masou</name>
    <name type="common">Cherry salmon</name>
    <name type="synonym">Masu salmon</name>
    <dbReference type="NCBI Taxonomy" id="8020"/>
    <lineage>
        <taxon>Eukaryota</taxon>
        <taxon>Metazoa</taxon>
        <taxon>Chordata</taxon>
        <taxon>Craniata</taxon>
        <taxon>Vertebrata</taxon>
        <taxon>Euteleostomi</taxon>
        <taxon>Actinopterygii</taxon>
        <taxon>Neopterygii</taxon>
        <taxon>Teleostei</taxon>
        <taxon>Protacanthopterygii</taxon>
        <taxon>Salmoniformes</taxon>
        <taxon>Salmonidae</taxon>
        <taxon>Salmoninae</taxon>
        <taxon>Oncorhynchus</taxon>
    </lineage>
</organism>
<reference key="1">
    <citation type="journal article" date="1992" name="J. Mol. Endocrinol.">
        <title>Characterization and localization of mRNA encoding the salmon-type gonadotrophin-releasing hormone precursor of the masu salmon.</title>
        <authorList>
            <person name="Suzuki M."/>
            <person name="Hyodo S."/>
            <person name="Kobayashi M."/>
            <person name="Aida K."/>
            <person name="Urano A."/>
        </authorList>
    </citation>
    <scope>NUCLEOTIDE SEQUENCE [MRNA]</scope>
</reference>
<gene>
    <name type="primary">gnrh3</name>
</gene>
<proteinExistence type="inferred from homology"/>
<name>GON3_ONCMA</name>
<dbReference type="EMBL" id="D10946">
    <property type="protein sequence ID" value="BAA01740.1"/>
    <property type="molecule type" value="mRNA"/>
</dbReference>
<dbReference type="EMBL" id="S44614">
    <property type="protein sequence ID" value="AAB63599.1"/>
    <property type="molecule type" value="mRNA"/>
</dbReference>
<dbReference type="PIR" id="I51180">
    <property type="entry name" value="I51180"/>
</dbReference>
<dbReference type="GO" id="GO:0005615">
    <property type="term" value="C:extracellular space"/>
    <property type="evidence" value="ECO:0000250"/>
    <property type="project" value="UniProtKB"/>
</dbReference>
<dbReference type="GO" id="GO:0005183">
    <property type="term" value="F:gonadotropin hormone-releasing hormone activity"/>
    <property type="evidence" value="ECO:0007669"/>
    <property type="project" value="TreeGrafter"/>
</dbReference>
<dbReference type="GO" id="GO:0031530">
    <property type="term" value="F:gonadotropin-releasing hormone receptor binding"/>
    <property type="evidence" value="ECO:0007669"/>
    <property type="project" value="TreeGrafter"/>
</dbReference>
<dbReference type="InterPro" id="IPR002012">
    <property type="entry name" value="GnRH"/>
</dbReference>
<dbReference type="InterPro" id="IPR019792">
    <property type="entry name" value="Gonadoliberin"/>
</dbReference>
<dbReference type="PANTHER" id="PTHR10522">
    <property type="entry name" value="GONADOLIBERIN"/>
    <property type="match status" value="1"/>
</dbReference>
<dbReference type="PANTHER" id="PTHR10522:SF6">
    <property type="entry name" value="PROGONADOLIBERIN-2"/>
    <property type="match status" value="1"/>
</dbReference>
<dbReference type="Pfam" id="PF00446">
    <property type="entry name" value="GnRH"/>
    <property type="match status" value="1"/>
</dbReference>
<dbReference type="PROSITE" id="PS00473">
    <property type="entry name" value="GNRH"/>
    <property type="match status" value="1"/>
</dbReference>
<protein>
    <recommendedName>
        <fullName>Progonadoliberin-3</fullName>
    </recommendedName>
    <alternativeName>
        <fullName>Progonadoliberin III</fullName>
    </alternativeName>
    <component>
        <recommendedName>
            <fullName>Gonadoliberin-3</fullName>
        </recommendedName>
        <alternativeName>
            <fullName>Gonadoliberin III</fullName>
        </alternativeName>
        <alternativeName>
            <fullName>Gonadotropin-releasing hormone III</fullName>
            <shortName>GnRH III</shortName>
        </alternativeName>
        <alternativeName>
            <fullName>Luliberin III</fullName>
        </alternativeName>
        <alternativeName>
            <fullName>Luteinizing hormone-releasing hormone III</fullName>
            <shortName>LH-RH III</shortName>
        </alternativeName>
    </component>
    <component>
        <recommendedName>
            <fullName>GnRH-associated peptide 3</fullName>
        </recommendedName>
        <alternativeName>
            <fullName>GnRH-associated peptide III</fullName>
        </alternativeName>
    </component>
</protein>
<evidence type="ECO:0000250" key="1">
    <source>
        <dbReference type="UniProtKB" id="P69105"/>
    </source>
</evidence>
<evidence type="ECO:0000305" key="2"/>
<keyword id="KW-0027">Amidation</keyword>
<keyword id="KW-0165">Cleavage on pair of basic residues</keyword>
<keyword id="KW-0372">Hormone</keyword>
<keyword id="KW-0873">Pyrrolidone carboxylic acid</keyword>
<keyword id="KW-0964">Secreted</keyword>
<keyword id="KW-0732">Signal</keyword>
<comment type="function">
    <text>Stimulates the secretion of gonadotropins.</text>
</comment>
<comment type="subcellular location">
    <subcellularLocation>
        <location>Secreted</location>
    </subcellularLocation>
</comment>
<comment type="similarity">
    <text evidence="2">Belongs to the GnRH family.</text>
</comment>
<sequence length="82" mass="9184">MDLSSKTVVQVVMLALIAQVTFSQHWSYGWLPGGKRSVGELEATIRMMDTGGVMALPEETGAHIPERLRPYDVMSKKRMPHK</sequence>
<accession>P30973</accession>
<feature type="signal peptide">
    <location>
        <begin position="1"/>
        <end position="23"/>
    </location>
</feature>
<feature type="chain" id="PRO_0000012508" description="Progonadoliberin-3">
    <location>
        <begin position="24"/>
        <end position="82"/>
    </location>
</feature>
<feature type="peptide" id="PRO_0000012509" description="Gonadoliberin-3">
    <location>
        <begin position="24"/>
        <end position="33"/>
    </location>
</feature>
<feature type="peptide" id="PRO_0000012510" description="GnRH-associated peptide 3">
    <location>
        <begin position="37"/>
        <end position="82"/>
    </location>
</feature>
<feature type="modified residue" description="Pyrrolidone carboxylic acid" evidence="1">
    <location>
        <position position="24"/>
    </location>
</feature>
<feature type="modified residue" description="Glycine amide" evidence="1">
    <location>
        <position position="33"/>
    </location>
</feature>